<accession>B5Y210</accession>
<organism>
    <name type="scientific">Klebsiella pneumoniae (strain 342)</name>
    <dbReference type="NCBI Taxonomy" id="507522"/>
    <lineage>
        <taxon>Bacteria</taxon>
        <taxon>Pseudomonadati</taxon>
        <taxon>Pseudomonadota</taxon>
        <taxon>Gammaproteobacteria</taxon>
        <taxon>Enterobacterales</taxon>
        <taxon>Enterobacteriaceae</taxon>
        <taxon>Klebsiella/Raoultella group</taxon>
        <taxon>Klebsiella</taxon>
        <taxon>Klebsiella pneumoniae complex</taxon>
    </lineage>
</organism>
<sequence length="273" mass="28738">MHDAQIRVAIAGAGGRMGRQLIQAALQMEGVALGAALEREGSSLVGSDAGELAGAGKAGVAVQSSLTAVKDDFDVLIDFTRPEGTLNHLAFCREHGKGMVIGTTGFDDAGKQAIRDAAQEIAIVFAANFSVGVNVLLKLLEKAAKVMGDYTDIEIIEAHHRHKVDAPSGTALAMGEAIAGALNKDLKECAVYSREGHTGERVPGTIGFATVRAGDIVGEHTAMFADIGERIEITHKASSRMTFANGAVRSALWLKDKKNGLFDMRDVLDLNSL</sequence>
<comment type="function">
    <text evidence="1">Catalyzes the conversion of 4-hydroxy-tetrahydrodipicolinate (HTPA) to tetrahydrodipicolinate.</text>
</comment>
<comment type="catalytic activity">
    <reaction evidence="1">
        <text>(S)-2,3,4,5-tetrahydrodipicolinate + NAD(+) + H2O = (2S,4S)-4-hydroxy-2,3,4,5-tetrahydrodipicolinate + NADH + H(+)</text>
        <dbReference type="Rhea" id="RHEA:35323"/>
        <dbReference type="ChEBI" id="CHEBI:15377"/>
        <dbReference type="ChEBI" id="CHEBI:15378"/>
        <dbReference type="ChEBI" id="CHEBI:16845"/>
        <dbReference type="ChEBI" id="CHEBI:57540"/>
        <dbReference type="ChEBI" id="CHEBI:57945"/>
        <dbReference type="ChEBI" id="CHEBI:67139"/>
        <dbReference type="EC" id="1.17.1.8"/>
    </reaction>
</comment>
<comment type="catalytic activity">
    <reaction evidence="1">
        <text>(S)-2,3,4,5-tetrahydrodipicolinate + NADP(+) + H2O = (2S,4S)-4-hydroxy-2,3,4,5-tetrahydrodipicolinate + NADPH + H(+)</text>
        <dbReference type="Rhea" id="RHEA:35331"/>
        <dbReference type="ChEBI" id="CHEBI:15377"/>
        <dbReference type="ChEBI" id="CHEBI:15378"/>
        <dbReference type="ChEBI" id="CHEBI:16845"/>
        <dbReference type="ChEBI" id="CHEBI:57783"/>
        <dbReference type="ChEBI" id="CHEBI:58349"/>
        <dbReference type="ChEBI" id="CHEBI:67139"/>
        <dbReference type="EC" id="1.17.1.8"/>
    </reaction>
</comment>
<comment type="pathway">
    <text evidence="1">Amino-acid biosynthesis; L-lysine biosynthesis via DAP pathway; (S)-tetrahydrodipicolinate from L-aspartate: step 4/4.</text>
</comment>
<comment type="subunit">
    <text evidence="1">Homotetramer.</text>
</comment>
<comment type="subcellular location">
    <subcellularLocation>
        <location evidence="1">Cytoplasm</location>
    </subcellularLocation>
</comment>
<comment type="similarity">
    <text evidence="1">Belongs to the DapB family.</text>
</comment>
<comment type="caution">
    <text evidence="2">Was originally thought to be a dihydrodipicolinate reductase (DHDPR), catalyzing the conversion of dihydrodipicolinate to tetrahydrodipicolinate. However, it was shown in E.coli that the substrate of the enzymatic reaction is not dihydrodipicolinate (DHDP) but in fact (2S,4S)-4-hydroxy-2,3,4,5-tetrahydrodipicolinic acid (HTPA), the product released by the DapA-catalyzed reaction.</text>
</comment>
<dbReference type="EC" id="1.17.1.8" evidence="1"/>
<dbReference type="EMBL" id="CP000964">
    <property type="protein sequence ID" value="ACI08405.1"/>
    <property type="molecule type" value="Genomic_DNA"/>
</dbReference>
<dbReference type="SMR" id="B5Y210"/>
<dbReference type="KEGG" id="kpe:KPK_4710"/>
<dbReference type="HOGENOM" id="CLU_047479_2_1_6"/>
<dbReference type="UniPathway" id="UPA00034">
    <property type="reaction ID" value="UER00018"/>
</dbReference>
<dbReference type="Proteomes" id="UP000001734">
    <property type="component" value="Chromosome"/>
</dbReference>
<dbReference type="GO" id="GO:0005829">
    <property type="term" value="C:cytosol"/>
    <property type="evidence" value="ECO:0007669"/>
    <property type="project" value="TreeGrafter"/>
</dbReference>
<dbReference type="GO" id="GO:0008839">
    <property type="term" value="F:4-hydroxy-tetrahydrodipicolinate reductase"/>
    <property type="evidence" value="ECO:0007669"/>
    <property type="project" value="UniProtKB-EC"/>
</dbReference>
<dbReference type="GO" id="GO:0051287">
    <property type="term" value="F:NAD binding"/>
    <property type="evidence" value="ECO:0007669"/>
    <property type="project" value="UniProtKB-UniRule"/>
</dbReference>
<dbReference type="GO" id="GO:0050661">
    <property type="term" value="F:NADP binding"/>
    <property type="evidence" value="ECO:0007669"/>
    <property type="project" value="UniProtKB-UniRule"/>
</dbReference>
<dbReference type="GO" id="GO:0016726">
    <property type="term" value="F:oxidoreductase activity, acting on CH or CH2 groups, NAD or NADP as acceptor"/>
    <property type="evidence" value="ECO:0007669"/>
    <property type="project" value="UniProtKB-UniRule"/>
</dbReference>
<dbReference type="GO" id="GO:0019877">
    <property type="term" value="P:diaminopimelate biosynthetic process"/>
    <property type="evidence" value="ECO:0007669"/>
    <property type="project" value="UniProtKB-UniRule"/>
</dbReference>
<dbReference type="GO" id="GO:0009089">
    <property type="term" value="P:lysine biosynthetic process via diaminopimelate"/>
    <property type="evidence" value="ECO:0007669"/>
    <property type="project" value="UniProtKB-UniRule"/>
</dbReference>
<dbReference type="CDD" id="cd02274">
    <property type="entry name" value="DHDPR_N"/>
    <property type="match status" value="1"/>
</dbReference>
<dbReference type="FunFam" id="3.30.360.10:FF:000004">
    <property type="entry name" value="4-hydroxy-tetrahydrodipicolinate reductase"/>
    <property type="match status" value="1"/>
</dbReference>
<dbReference type="FunFam" id="3.40.50.720:FF:000048">
    <property type="entry name" value="4-hydroxy-tetrahydrodipicolinate reductase"/>
    <property type="match status" value="1"/>
</dbReference>
<dbReference type="Gene3D" id="3.30.360.10">
    <property type="entry name" value="Dihydrodipicolinate Reductase, domain 2"/>
    <property type="match status" value="1"/>
</dbReference>
<dbReference type="Gene3D" id="3.40.50.720">
    <property type="entry name" value="NAD(P)-binding Rossmann-like Domain"/>
    <property type="match status" value="1"/>
</dbReference>
<dbReference type="HAMAP" id="MF_00102">
    <property type="entry name" value="DapB"/>
    <property type="match status" value="1"/>
</dbReference>
<dbReference type="InterPro" id="IPR022663">
    <property type="entry name" value="DapB_C"/>
</dbReference>
<dbReference type="InterPro" id="IPR000846">
    <property type="entry name" value="DapB_N"/>
</dbReference>
<dbReference type="InterPro" id="IPR022664">
    <property type="entry name" value="DapB_N_CS"/>
</dbReference>
<dbReference type="InterPro" id="IPR023940">
    <property type="entry name" value="DHDPR_bac"/>
</dbReference>
<dbReference type="InterPro" id="IPR036291">
    <property type="entry name" value="NAD(P)-bd_dom_sf"/>
</dbReference>
<dbReference type="NCBIfam" id="TIGR00036">
    <property type="entry name" value="dapB"/>
    <property type="match status" value="1"/>
</dbReference>
<dbReference type="PANTHER" id="PTHR20836:SF0">
    <property type="entry name" value="4-HYDROXY-TETRAHYDRODIPICOLINATE REDUCTASE 1, CHLOROPLASTIC-RELATED"/>
    <property type="match status" value="1"/>
</dbReference>
<dbReference type="PANTHER" id="PTHR20836">
    <property type="entry name" value="DIHYDRODIPICOLINATE REDUCTASE"/>
    <property type="match status" value="1"/>
</dbReference>
<dbReference type="Pfam" id="PF05173">
    <property type="entry name" value="DapB_C"/>
    <property type="match status" value="1"/>
</dbReference>
<dbReference type="Pfam" id="PF01113">
    <property type="entry name" value="DapB_N"/>
    <property type="match status" value="1"/>
</dbReference>
<dbReference type="PIRSF" id="PIRSF000161">
    <property type="entry name" value="DHPR"/>
    <property type="match status" value="1"/>
</dbReference>
<dbReference type="SUPFAM" id="SSF55347">
    <property type="entry name" value="Glyceraldehyde-3-phosphate dehydrogenase-like, C-terminal domain"/>
    <property type="match status" value="1"/>
</dbReference>
<dbReference type="SUPFAM" id="SSF51735">
    <property type="entry name" value="NAD(P)-binding Rossmann-fold domains"/>
    <property type="match status" value="1"/>
</dbReference>
<dbReference type="PROSITE" id="PS01298">
    <property type="entry name" value="DAPB"/>
    <property type="match status" value="1"/>
</dbReference>
<keyword id="KW-0028">Amino-acid biosynthesis</keyword>
<keyword id="KW-0963">Cytoplasm</keyword>
<keyword id="KW-0220">Diaminopimelate biosynthesis</keyword>
<keyword id="KW-0457">Lysine biosynthesis</keyword>
<keyword id="KW-0520">NAD</keyword>
<keyword id="KW-0521">NADP</keyword>
<keyword id="KW-0560">Oxidoreductase</keyword>
<evidence type="ECO:0000255" key="1">
    <source>
        <dbReference type="HAMAP-Rule" id="MF_00102"/>
    </source>
</evidence>
<evidence type="ECO:0000305" key="2"/>
<reference key="1">
    <citation type="journal article" date="2008" name="PLoS Genet.">
        <title>Complete genome sequence of the N2-fixing broad host range endophyte Klebsiella pneumoniae 342 and virulence predictions verified in mice.</title>
        <authorList>
            <person name="Fouts D.E."/>
            <person name="Tyler H.L."/>
            <person name="DeBoy R.T."/>
            <person name="Daugherty S."/>
            <person name="Ren Q."/>
            <person name="Badger J.H."/>
            <person name="Durkin A.S."/>
            <person name="Huot H."/>
            <person name="Shrivastava S."/>
            <person name="Kothari S."/>
            <person name="Dodson R.J."/>
            <person name="Mohamoud Y."/>
            <person name="Khouri H."/>
            <person name="Roesch L.F.W."/>
            <person name="Krogfelt K.A."/>
            <person name="Struve C."/>
            <person name="Triplett E.W."/>
            <person name="Methe B.A."/>
        </authorList>
    </citation>
    <scope>NUCLEOTIDE SEQUENCE [LARGE SCALE GENOMIC DNA]</scope>
    <source>
        <strain>342</strain>
    </source>
</reference>
<protein>
    <recommendedName>
        <fullName evidence="1">4-hydroxy-tetrahydrodipicolinate reductase</fullName>
        <shortName evidence="1">HTPA reductase</shortName>
        <ecNumber evidence="1">1.17.1.8</ecNumber>
    </recommendedName>
</protein>
<proteinExistence type="inferred from homology"/>
<name>DAPB_KLEP3</name>
<gene>
    <name evidence="1" type="primary">dapB</name>
    <name type="ordered locus">KPK_4710</name>
</gene>
<feature type="chain" id="PRO_1000093977" description="4-hydroxy-tetrahydrodipicolinate reductase">
    <location>
        <begin position="1"/>
        <end position="273"/>
    </location>
</feature>
<feature type="active site" description="Proton donor/acceptor" evidence="1">
    <location>
        <position position="159"/>
    </location>
</feature>
<feature type="active site" description="Proton donor" evidence="1">
    <location>
        <position position="163"/>
    </location>
</feature>
<feature type="binding site" evidence="1">
    <location>
        <begin position="12"/>
        <end position="17"/>
    </location>
    <ligand>
        <name>NAD(+)</name>
        <dbReference type="ChEBI" id="CHEBI:57540"/>
    </ligand>
</feature>
<feature type="binding site" evidence="1">
    <location>
        <position position="38"/>
    </location>
    <ligand>
        <name>NAD(+)</name>
        <dbReference type="ChEBI" id="CHEBI:57540"/>
    </ligand>
</feature>
<feature type="binding site" evidence="1">
    <location>
        <position position="39"/>
    </location>
    <ligand>
        <name>NADP(+)</name>
        <dbReference type="ChEBI" id="CHEBI:58349"/>
    </ligand>
</feature>
<feature type="binding site" evidence="1">
    <location>
        <begin position="102"/>
        <end position="104"/>
    </location>
    <ligand>
        <name>NAD(+)</name>
        <dbReference type="ChEBI" id="CHEBI:57540"/>
    </ligand>
</feature>
<feature type="binding site" evidence="1">
    <location>
        <begin position="126"/>
        <end position="129"/>
    </location>
    <ligand>
        <name>NAD(+)</name>
        <dbReference type="ChEBI" id="CHEBI:57540"/>
    </ligand>
</feature>
<feature type="binding site" evidence="1">
    <location>
        <position position="160"/>
    </location>
    <ligand>
        <name>(S)-2,3,4,5-tetrahydrodipicolinate</name>
        <dbReference type="ChEBI" id="CHEBI:16845"/>
    </ligand>
</feature>
<feature type="binding site" evidence="1">
    <location>
        <begin position="169"/>
        <end position="170"/>
    </location>
    <ligand>
        <name>(S)-2,3,4,5-tetrahydrodipicolinate</name>
        <dbReference type="ChEBI" id="CHEBI:16845"/>
    </ligand>
</feature>